<gene>
    <name type="primary">COQ10</name>
    <name type="ordered locus">ACL012W</name>
</gene>
<name>COQ10_EREGS</name>
<keyword id="KW-0472">Membrane</keyword>
<keyword id="KW-0496">Mitochondrion</keyword>
<keyword id="KW-0999">Mitochondrion inner membrane</keyword>
<keyword id="KW-1185">Reference proteome</keyword>
<keyword id="KW-0809">Transit peptide</keyword>
<reference key="1">
    <citation type="journal article" date="2004" name="Science">
        <title>The Ashbya gossypii genome as a tool for mapping the ancient Saccharomyces cerevisiae genome.</title>
        <authorList>
            <person name="Dietrich F.S."/>
            <person name="Voegeli S."/>
            <person name="Brachat S."/>
            <person name="Lerch A."/>
            <person name="Gates K."/>
            <person name="Steiner S."/>
            <person name="Mohr C."/>
            <person name="Poehlmann R."/>
            <person name="Luedi P."/>
            <person name="Choi S."/>
            <person name="Wing R.A."/>
            <person name="Flavier A."/>
            <person name="Gaffney T.D."/>
            <person name="Philippsen P."/>
        </authorList>
    </citation>
    <scope>NUCLEOTIDE SEQUENCE [LARGE SCALE GENOMIC DNA]</scope>
    <source>
        <strain>ATCC 10895 / CBS 109.51 / FGSC 9923 / NRRL Y-1056</strain>
    </source>
</reference>
<reference key="2">
    <citation type="journal article" date="2013" name="G3 (Bethesda)">
        <title>Genomes of Ashbya fungi isolated from insects reveal four mating-type loci, numerous translocations, lack of transposons, and distinct gene duplications.</title>
        <authorList>
            <person name="Dietrich F.S."/>
            <person name="Voegeli S."/>
            <person name="Kuo S."/>
            <person name="Philippsen P."/>
        </authorList>
    </citation>
    <scope>GENOME REANNOTATION</scope>
    <source>
        <strain>ATCC 10895 / CBS 109.51 / FGSC 9923 / NRRL Y-1056</strain>
    </source>
</reference>
<dbReference type="EMBL" id="AE016816">
    <property type="protein sequence ID" value="AAS51216.1"/>
    <property type="molecule type" value="Genomic_DNA"/>
</dbReference>
<dbReference type="RefSeq" id="NP_983392.1">
    <property type="nucleotide sequence ID" value="NM_208745.1"/>
</dbReference>
<dbReference type="SMR" id="Q75CC1"/>
<dbReference type="FunCoup" id="Q75CC1">
    <property type="interactions" value="146"/>
</dbReference>
<dbReference type="STRING" id="284811.Q75CC1"/>
<dbReference type="EnsemblFungi" id="AAS51216">
    <property type="protein sequence ID" value="AAS51216"/>
    <property type="gene ID" value="AGOS_ACL012W"/>
</dbReference>
<dbReference type="GeneID" id="4619517"/>
<dbReference type="KEGG" id="ago:AGOS_ACL012W"/>
<dbReference type="eggNOG" id="KOG3177">
    <property type="taxonomic scope" value="Eukaryota"/>
</dbReference>
<dbReference type="HOGENOM" id="CLU_079653_1_2_1"/>
<dbReference type="InParanoid" id="Q75CC1"/>
<dbReference type="OMA" id="IDGPFKY"/>
<dbReference type="OrthoDB" id="292693at2759"/>
<dbReference type="Proteomes" id="UP000000591">
    <property type="component" value="Chromosome III"/>
</dbReference>
<dbReference type="GO" id="GO:0005743">
    <property type="term" value="C:mitochondrial inner membrane"/>
    <property type="evidence" value="ECO:0007669"/>
    <property type="project" value="UniProtKB-SubCell"/>
</dbReference>
<dbReference type="GO" id="GO:0005739">
    <property type="term" value="C:mitochondrion"/>
    <property type="evidence" value="ECO:0000318"/>
    <property type="project" value="GO_Central"/>
</dbReference>
<dbReference type="GO" id="GO:0140104">
    <property type="term" value="F:molecular carrier activity"/>
    <property type="evidence" value="ECO:0007669"/>
    <property type="project" value="EnsemblFungi"/>
</dbReference>
<dbReference type="GO" id="GO:0048039">
    <property type="term" value="F:ubiquinone binding"/>
    <property type="evidence" value="ECO:0007669"/>
    <property type="project" value="EnsemblFungi"/>
</dbReference>
<dbReference type="GO" id="GO:0045333">
    <property type="term" value="P:cellular respiration"/>
    <property type="evidence" value="ECO:0007669"/>
    <property type="project" value="InterPro"/>
</dbReference>
<dbReference type="GO" id="GO:0006744">
    <property type="term" value="P:ubiquinone biosynthetic process"/>
    <property type="evidence" value="ECO:0007669"/>
    <property type="project" value="EnsemblFungi"/>
</dbReference>
<dbReference type="CDD" id="cd07813">
    <property type="entry name" value="COQ10p_like"/>
    <property type="match status" value="1"/>
</dbReference>
<dbReference type="FunFam" id="3.30.530.20:FF:000052">
    <property type="entry name" value="Coenzyme Q"/>
    <property type="match status" value="1"/>
</dbReference>
<dbReference type="Gene3D" id="3.30.530.20">
    <property type="match status" value="1"/>
</dbReference>
<dbReference type="InterPro" id="IPR044996">
    <property type="entry name" value="COQ10-like"/>
</dbReference>
<dbReference type="InterPro" id="IPR005031">
    <property type="entry name" value="COQ10_START"/>
</dbReference>
<dbReference type="InterPro" id="IPR023393">
    <property type="entry name" value="START-like_dom_sf"/>
</dbReference>
<dbReference type="PANTHER" id="PTHR12901:SF10">
    <property type="entry name" value="COENZYME Q-BINDING PROTEIN COQ10, MITOCHONDRIAL"/>
    <property type="match status" value="1"/>
</dbReference>
<dbReference type="PANTHER" id="PTHR12901">
    <property type="entry name" value="SPERM PROTEIN HOMOLOG"/>
    <property type="match status" value="1"/>
</dbReference>
<dbReference type="Pfam" id="PF03364">
    <property type="entry name" value="Polyketide_cyc"/>
    <property type="match status" value="1"/>
</dbReference>
<dbReference type="SUPFAM" id="SSF55961">
    <property type="entry name" value="Bet v1-like"/>
    <property type="match status" value="1"/>
</dbReference>
<evidence type="ECO:0000250" key="1"/>
<evidence type="ECO:0000255" key="2"/>
<evidence type="ECO:0000305" key="3"/>
<protein>
    <recommendedName>
        <fullName>Coenzyme Q-binding protein COQ10, mitochondrial</fullName>
    </recommendedName>
</protein>
<comment type="function">
    <text evidence="1">Required for the function of coenzyme Q in the respiratory chain. May serve as a chaperone or may be involved in the transport of Q6 from its site of synthesis to the catalytic sites of the respiratory complexes (By similarity).</text>
</comment>
<comment type="subunit">
    <text evidence="1">Interacts with coenzyme Q.</text>
</comment>
<comment type="subcellular location">
    <subcellularLocation>
        <location evidence="1">Mitochondrion inner membrane</location>
        <topology evidence="1">Peripheral membrane protein</topology>
        <orientation evidence="1">Matrix side</orientation>
    </subcellularLocation>
</comment>
<comment type="similarity">
    <text evidence="3">Belongs to the COQ10 family.</text>
</comment>
<sequence>MLRCLISRPQLLPTRLPLATPSCVSRRTFLGFTGGDTKEQRYILKRVFNAPLHYVYPAVSEVSLYKLFIPYCTDSFVNKRRPGDNMPTEAGLRVGFQQYDETFVCRVDCTTLPGNQRSVVAESLAHHLFETLHTQWLLSPHPTRPDASVVELILRFKFKSQLYNSVSSIFGTRVTQVVMKAFEKRVFQLRKEAMDRPPTGDAGH</sequence>
<organism>
    <name type="scientific">Eremothecium gossypii (strain ATCC 10895 / CBS 109.51 / FGSC 9923 / NRRL Y-1056)</name>
    <name type="common">Yeast</name>
    <name type="synonym">Ashbya gossypii</name>
    <dbReference type="NCBI Taxonomy" id="284811"/>
    <lineage>
        <taxon>Eukaryota</taxon>
        <taxon>Fungi</taxon>
        <taxon>Dikarya</taxon>
        <taxon>Ascomycota</taxon>
        <taxon>Saccharomycotina</taxon>
        <taxon>Saccharomycetes</taxon>
        <taxon>Saccharomycetales</taxon>
        <taxon>Saccharomycetaceae</taxon>
        <taxon>Eremothecium</taxon>
    </lineage>
</organism>
<proteinExistence type="inferred from homology"/>
<feature type="transit peptide" description="Mitochondrion" evidence="2">
    <location>
        <begin position="1"/>
        <end position="24"/>
    </location>
</feature>
<feature type="chain" id="PRO_0000227687" description="Coenzyme Q-binding protein COQ10, mitochondrial">
    <location>
        <begin position="25"/>
        <end position="204"/>
    </location>
</feature>
<accession>Q75CC1</accession>